<name>RL4_RALPJ</name>
<sequence>MELKLLQDNGQLGAGVAASPEVFGRDYNEALVHQVVVAYQANARSGNRKQKDREEVKHTTKKPWRQKGTGRARAGMSSSPLWRGGGRIFPNSPEENFSQKVNKKMYRAGMRSIYSQLAREGRINVVDSLSVDAPKTKLLADKFRAMGLDSVLVITDNLDENLFLASRNLAHVLVVEPRHADPLSLVHYKKVLVTKAAVAQIEELLK</sequence>
<keyword id="KW-0687">Ribonucleoprotein</keyword>
<keyword id="KW-0689">Ribosomal protein</keyword>
<keyword id="KW-0694">RNA-binding</keyword>
<keyword id="KW-0699">rRNA-binding</keyword>
<protein>
    <recommendedName>
        <fullName evidence="1">Large ribosomal subunit protein uL4</fullName>
    </recommendedName>
    <alternativeName>
        <fullName evidence="3">50S ribosomal protein L4</fullName>
    </alternativeName>
</protein>
<reference key="1">
    <citation type="submission" date="2008-05" db="EMBL/GenBank/DDBJ databases">
        <title>Complete sequence of chromosome 1 of Ralstonia pickettii 12J.</title>
        <authorList>
            <person name="Lucas S."/>
            <person name="Copeland A."/>
            <person name="Lapidus A."/>
            <person name="Glavina del Rio T."/>
            <person name="Dalin E."/>
            <person name="Tice H."/>
            <person name="Bruce D."/>
            <person name="Goodwin L."/>
            <person name="Pitluck S."/>
            <person name="Meincke L."/>
            <person name="Brettin T."/>
            <person name="Detter J.C."/>
            <person name="Han C."/>
            <person name="Kuske C.R."/>
            <person name="Schmutz J."/>
            <person name="Larimer F."/>
            <person name="Land M."/>
            <person name="Hauser L."/>
            <person name="Kyrpides N."/>
            <person name="Mikhailova N."/>
            <person name="Marsh T."/>
            <person name="Richardson P."/>
        </authorList>
    </citation>
    <scope>NUCLEOTIDE SEQUENCE [LARGE SCALE GENOMIC DNA]</scope>
    <source>
        <strain>12J</strain>
    </source>
</reference>
<comment type="function">
    <text evidence="1">One of the primary rRNA binding proteins, this protein initially binds near the 5'-end of the 23S rRNA. It is important during the early stages of 50S assembly. It makes multiple contacts with different domains of the 23S rRNA in the assembled 50S subunit and ribosome.</text>
</comment>
<comment type="function">
    <text evidence="1">Forms part of the polypeptide exit tunnel.</text>
</comment>
<comment type="subunit">
    <text evidence="1">Part of the 50S ribosomal subunit.</text>
</comment>
<comment type="similarity">
    <text evidence="1">Belongs to the universal ribosomal protein uL4 family.</text>
</comment>
<gene>
    <name evidence="1" type="primary">rplD</name>
    <name type="ordered locus">Rpic_3296</name>
</gene>
<proteinExistence type="inferred from homology"/>
<organism>
    <name type="scientific">Ralstonia pickettii (strain 12J)</name>
    <dbReference type="NCBI Taxonomy" id="402626"/>
    <lineage>
        <taxon>Bacteria</taxon>
        <taxon>Pseudomonadati</taxon>
        <taxon>Pseudomonadota</taxon>
        <taxon>Betaproteobacteria</taxon>
        <taxon>Burkholderiales</taxon>
        <taxon>Burkholderiaceae</taxon>
        <taxon>Ralstonia</taxon>
    </lineage>
</organism>
<accession>B2UEL8</accession>
<evidence type="ECO:0000255" key="1">
    <source>
        <dbReference type="HAMAP-Rule" id="MF_01328"/>
    </source>
</evidence>
<evidence type="ECO:0000256" key="2">
    <source>
        <dbReference type="SAM" id="MobiDB-lite"/>
    </source>
</evidence>
<evidence type="ECO:0000305" key="3"/>
<feature type="chain" id="PRO_1000142173" description="Large ribosomal subunit protein uL4">
    <location>
        <begin position="1"/>
        <end position="206"/>
    </location>
</feature>
<feature type="region of interest" description="Disordered" evidence="2">
    <location>
        <begin position="43"/>
        <end position="78"/>
    </location>
</feature>
<feature type="compositionally biased region" description="Basic and acidic residues" evidence="2">
    <location>
        <begin position="49"/>
        <end position="58"/>
    </location>
</feature>
<feature type="compositionally biased region" description="Basic residues" evidence="2">
    <location>
        <begin position="59"/>
        <end position="70"/>
    </location>
</feature>
<dbReference type="EMBL" id="CP001068">
    <property type="protein sequence ID" value="ACD28418.1"/>
    <property type="molecule type" value="Genomic_DNA"/>
</dbReference>
<dbReference type="SMR" id="B2UEL8"/>
<dbReference type="STRING" id="402626.Rpic_3296"/>
<dbReference type="KEGG" id="rpi:Rpic_3296"/>
<dbReference type="eggNOG" id="COG0088">
    <property type="taxonomic scope" value="Bacteria"/>
</dbReference>
<dbReference type="HOGENOM" id="CLU_041575_5_2_4"/>
<dbReference type="GO" id="GO:1990904">
    <property type="term" value="C:ribonucleoprotein complex"/>
    <property type="evidence" value="ECO:0007669"/>
    <property type="project" value="UniProtKB-KW"/>
</dbReference>
<dbReference type="GO" id="GO:0005840">
    <property type="term" value="C:ribosome"/>
    <property type="evidence" value="ECO:0007669"/>
    <property type="project" value="UniProtKB-KW"/>
</dbReference>
<dbReference type="GO" id="GO:0019843">
    <property type="term" value="F:rRNA binding"/>
    <property type="evidence" value="ECO:0007669"/>
    <property type="project" value="UniProtKB-UniRule"/>
</dbReference>
<dbReference type="GO" id="GO:0003735">
    <property type="term" value="F:structural constituent of ribosome"/>
    <property type="evidence" value="ECO:0007669"/>
    <property type="project" value="InterPro"/>
</dbReference>
<dbReference type="GO" id="GO:0006412">
    <property type="term" value="P:translation"/>
    <property type="evidence" value="ECO:0007669"/>
    <property type="project" value="UniProtKB-UniRule"/>
</dbReference>
<dbReference type="Gene3D" id="3.40.1370.10">
    <property type="match status" value="1"/>
</dbReference>
<dbReference type="HAMAP" id="MF_01328_B">
    <property type="entry name" value="Ribosomal_uL4_B"/>
    <property type="match status" value="1"/>
</dbReference>
<dbReference type="InterPro" id="IPR002136">
    <property type="entry name" value="Ribosomal_uL4"/>
</dbReference>
<dbReference type="InterPro" id="IPR013005">
    <property type="entry name" value="Ribosomal_uL4-like"/>
</dbReference>
<dbReference type="InterPro" id="IPR023574">
    <property type="entry name" value="Ribosomal_uL4_dom_sf"/>
</dbReference>
<dbReference type="NCBIfam" id="TIGR03953">
    <property type="entry name" value="rplD_bact"/>
    <property type="match status" value="1"/>
</dbReference>
<dbReference type="PANTHER" id="PTHR10746">
    <property type="entry name" value="50S RIBOSOMAL PROTEIN L4"/>
    <property type="match status" value="1"/>
</dbReference>
<dbReference type="PANTHER" id="PTHR10746:SF6">
    <property type="entry name" value="LARGE RIBOSOMAL SUBUNIT PROTEIN UL4M"/>
    <property type="match status" value="1"/>
</dbReference>
<dbReference type="Pfam" id="PF00573">
    <property type="entry name" value="Ribosomal_L4"/>
    <property type="match status" value="1"/>
</dbReference>
<dbReference type="SUPFAM" id="SSF52166">
    <property type="entry name" value="Ribosomal protein L4"/>
    <property type="match status" value="1"/>
</dbReference>